<gene>
    <name type="primary">HYCC1</name>
    <name type="synonym">DRCTNNB1A</name>
    <name type="synonym">FAM126A</name>
    <name type="ORF">RCJMB04_3h8</name>
</gene>
<feature type="chain" id="PRO_0000080004" description="Hyccin">
    <location>
        <begin position="1"/>
        <end position="515"/>
    </location>
</feature>
<feature type="region of interest" description="Disordered" evidence="2">
    <location>
        <begin position="358"/>
        <end position="410"/>
    </location>
</feature>
<feature type="region of interest" description="Disordered" evidence="2">
    <location>
        <begin position="491"/>
        <end position="515"/>
    </location>
</feature>
<feature type="compositionally biased region" description="Low complexity" evidence="2">
    <location>
        <begin position="358"/>
        <end position="378"/>
    </location>
</feature>
<feature type="compositionally biased region" description="Basic and acidic residues" evidence="2">
    <location>
        <begin position="389"/>
        <end position="403"/>
    </location>
</feature>
<feature type="compositionally biased region" description="Polar residues" evidence="2">
    <location>
        <begin position="498"/>
        <end position="515"/>
    </location>
</feature>
<feature type="sequence conflict" description="In Ref. 1; CAG31230." ref="1">
    <original>SR</original>
    <variation>RI</variation>
    <location>
        <begin position="228"/>
        <end position="229"/>
    </location>
</feature>
<feature type="sequence conflict" description="In Ref. 1; CAG31230." ref="1">
    <original>E</original>
    <variation>S</variation>
    <location>
        <position position="235"/>
    </location>
</feature>
<feature type="sequence conflict" description="In Ref. 1; CAG31230." ref="1">
    <original>DLARKAMD</original>
    <variation>MIWLVRLW</variation>
    <location>
        <begin position="254"/>
        <end position="261"/>
    </location>
</feature>
<feature type="sequence conflict" description="In Ref. 1; CAG31230." ref="1">
    <original>G</original>
    <variation>S</variation>
    <location>
        <position position="289"/>
    </location>
</feature>
<feature type="sequence conflict" description="In Ref. 1; CAG31230." ref="1">
    <original>V</original>
    <variation>L</variation>
    <location>
        <position position="418"/>
    </location>
</feature>
<sequence>MLAVDTGLVEEWLSEFKTLPEASISSYATNLKDKTALISSLYKVIQEPQSELLEPVCHQLFEFYRSGEEQLLRFTLQFLPELMWCYLAVSASRDLQSSGCIEALLLGVYNLEIVDKEGHSKVLSFTIPSLSKPSVYHEPSSIGSMALTEGALSQHGLSRVVYSGPHPQREMLTAQNRFEVLTFLLLCYNAALSYMPAISLQSLCQICSRICVCGYPRQQVRKYKGVNSRIPVSSEFMVQMLTGIYYAFYNGEWDLARKAMDDVLYRAQLELYPEPLLVANAIKASLPQGAMKSSKEGTKCIQVEITPTSSRISRNAVTSMSIRGHRWKRHGNADLGIEEELIEVSETDEGFYSRAASSTSQSALSNSSNTSSKNLLGKSQRRSGGSKAAGREKEGETCREHLSRKQTQRALSENLELVSLKRLTLTTSQSLPKPGSHSLARTTTTVFSKSFEQVSGVTVANNRGGVSGTEANRFSACSLQEEKLIYGTERTDLPVLSKQPNQQRPPSISITLSTD</sequence>
<evidence type="ECO:0000250" key="1">
    <source>
        <dbReference type="UniProtKB" id="Q9BYI3"/>
    </source>
</evidence>
<evidence type="ECO:0000256" key="2">
    <source>
        <dbReference type="SAM" id="MobiDB-lite"/>
    </source>
</evidence>
<evidence type="ECO:0000305" key="3"/>
<reference key="1">
    <citation type="journal article" date="2005" name="Genome Biol.">
        <title>Full-length cDNAs from chicken bursal lymphocytes to facilitate gene function analysis.</title>
        <authorList>
            <person name="Caldwell R.B."/>
            <person name="Kierzek A.M."/>
            <person name="Arakawa H."/>
            <person name="Bezzubov Y."/>
            <person name="Zaim J."/>
            <person name="Fiedler P."/>
            <person name="Kutter S."/>
            <person name="Blagodatski A."/>
            <person name="Kostovska D."/>
            <person name="Koter M."/>
            <person name="Plachy J."/>
            <person name="Carninci P."/>
            <person name="Hayashizaki Y."/>
            <person name="Buerstedde J.-M."/>
        </authorList>
    </citation>
    <scope>NUCLEOTIDE SEQUENCE [LARGE SCALE MRNA]</scope>
    <source>
        <strain>CB</strain>
        <tissue>Bursa of Fabricius</tissue>
    </source>
</reference>
<reference key="2">
    <citation type="journal article" date="2004" name="Nature">
        <title>Sequence and comparative analysis of the chicken genome provide unique perspectives on vertebrate evolution.</title>
        <authorList>
            <person name="Hillier L.W."/>
            <person name="Miller W."/>
            <person name="Birney E."/>
            <person name="Warren W."/>
            <person name="Hardison R.C."/>
            <person name="Ponting C.P."/>
            <person name="Bork P."/>
            <person name="Burt D.W."/>
            <person name="Groenen M.A.M."/>
            <person name="Delany M.E."/>
            <person name="Dodgson J.B."/>
            <person name="Chinwalla A.T."/>
            <person name="Cliften P.F."/>
            <person name="Clifton S.W."/>
            <person name="Delehaunty K.D."/>
            <person name="Fronick C."/>
            <person name="Fulton R.S."/>
            <person name="Graves T.A."/>
            <person name="Kremitzki C."/>
            <person name="Layman D."/>
            <person name="Magrini V."/>
            <person name="McPherson J.D."/>
            <person name="Miner T.L."/>
            <person name="Minx P."/>
            <person name="Nash W.E."/>
            <person name="Nhan M.N."/>
            <person name="Nelson J.O."/>
            <person name="Oddy L.G."/>
            <person name="Pohl C.S."/>
            <person name="Randall-Maher J."/>
            <person name="Smith S.M."/>
            <person name="Wallis J.W."/>
            <person name="Yang S.-P."/>
            <person name="Romanov M.N."/>
            <person name="Rondelli C.M."/>
            <person name="Paton B."/>
            <person name="Smith J."/>
            <person name="Morrice D."/>
            <person name="Daniels L."/>
            <person name="Tempest H.G."/>
            <person name="Robertson L."/>
            <person name="Masabanda J.S."/>
            <person name="Griffin D.K."/>
            <person name="Vignal A."/>
            <person name="Fillon V."/>
            <person name="Jacobbson L."/>
            <person name="Kerje S."/>
            <person name="Andersson L."/>
            <person name="Crooijmans R.P."/>
            <person name="Aerts J."/>
            <person name="van der Poel J.J."/>
            <person name="Ellegren H."/>
            <person name="Caldwell R.B."/>
            <person name="Hubbard S.J."/>
            <person name="Grafham D.V."/>
            <person name="Kierzek A.M."/>
            <person name="McLaren S.R."/>
            <person name="Overton I.M."/>
            <person name="Arakawa H."/>
            <person name="Beattie K.J."/>
            <person name="Bezzubov Y."/>
            <person name="Boardman P.E."/>
            <person name="Bonfield J.K."/>
            <person name="Croning M.D.R."/>
            <person name="Davies R.M."/>
            <person name="Francis M.D."/>
            <person name="Humphray S.J."/>
            <person name="Scott C.E."/>
            <person name="Taylor R.G."/>
            <person name="Tickle C."/>
            <person name="Brown W.R.A."/>
            <person name="Rogers J."/>
            <person name="Buerstedde J.-M."/>
            <person name="Wilson S.A."/>
            <person name="Stubbs L."/>
            <person name="Ovcharenko I."/>
            <person name="Gordon L."/>
            <person name="Lucas S."/>
            <person name="Miller M.M."/>
            <person name="Inoko H."/>
            <person name="Shiina T."/>
            <person name="Kaufman J."/>
            <person name="Salomonsen J."/>
            <person name="Skjoedt K."/>
            <person name="Wong G.K.-S."/>
            <person name="Wang J."/>
            <person name="Liu B."/>
            <person name="Wang J."/>
            <person name="Yu J."/>
            <person name="Yang H."/>
            <person name="Nefedov M."/>
            <person name="Koriabine M."/>
            <person name="Dejong P.J."/>
            <person name="Goodstadt L."/>
            <person name="Webber C."/>
            <person name="Dickens N.J."/>
            <person name="Letunic I."/>
            <person name="Suyama M."/>
            <person name="Torrents D."/>
            <person name="von Mering C."/>
            <person name="Zdobnov E.M."/>
            <person name="Makova K."/>
            <person name="Nekrutenko A."/>
            <person name="Elnitski L."/>
            <person name="Eswara P."/>
            <person name="King D.C."/>
            <person name="Yang S.-P."/>
            <person name="Tyekucheva S."/>
            <person name="Radakrishnan A."/>
            <person name="Harris R.S."/>
            <person name="Chiaromonte F."/>
            <person name="Taylor J."/>
            <person name="He J."/>
            <person name="Rijnkels M."/>
            <person name="Griffiths-Jones S."/>
            <person name="Ureta-Vidal A."/>
            <person name="Hoffman M.M."/>
            <person name="Severin J."/>
            <person name="Searle S.M.J."/>
            <person name="Law A.S."/>
            <person name="Speed D."/>
            <person name="Waddington D."/>
            <person name="Cheng Z."/>
            <person name="Tuzun E."/>
            <person name="Eichler E."/>
            <person name="Bao Z."/>
            <person name="Flicek P."/>
            <person name="Shteynberg D.D."/>
            <person name="Brent M.R."/>
            <person name="Bye J.M."/>
            <person name="Huckle E.J."/>
            <person name="Chatterji S."/>
            <person name="Dewey C."/>
            <person name="Pachter L."/>
            <person name="Kouranov A."/>
            <person name="Mourelatos Z."/>
            <person name="Hatzigeorgiou A.G."/>
            <person name="Paterson A.H."/>
            <person name="Ivarie R."/>
            <person name="Brandstrom M."/>
            <person name="Axelsson E."/>
            <person name="Backstrom N."/>
            <person name="Berlin S."/>
            <person name="Webster M.T."/>
            <person name="Pourquie O."/>
            <person name="Reymond A."/>
            <person name="Ucla C."/>
            <person name="Antonarakis S.E."/>
            <person name="Long M."/>
            <person name="Emerson J.J."/>
            <person name="Betran E."/>
            <person name="Dupanloup I."/>
            <person name="Kaessmann H."/>
            <person name="Hinrichs A.S."/>
            <person name="Bejerano G."/>
            <person name="Furey T.S."/>
            <person name="Harte R.A."/>
            <person name="Raney B."/>
            <person name="Siepel A."/>
            <person name="Kent W.J."/>
            <person name="Haussler D."/>
            <person name="Eyras E."/>
            <person name="Castelo R."/>
            <person name="Abril J.F."/>
            <person name="Castellano S."/>
            <person name="Camara F."/>
            <person name="Parra G."/>
            <person name="Guigo R."/>
            <person name="Bourque G."/>
            <person name="Tesler G."/>
            <person name="Pevzner P.A."/>
            <person name="Smit A."/>
            <person name="Fulton L.A."/>
            <person name="Mardis E.R."/>
            <person name="Wilson R.K."/>
        </authorList>
    </citation>
    <scope>NUCLEOTIDE SEQUENCE [LARGE SCALE GENOMIC DNA]</scope>
    <scope>IDENTIFICATION</scope>
    <source>
        <strain>Red jungle fowl</strain>
    </source>
</reference>
<name>HYCCI_CHICK</name>
<proteinExistence type="evidence at transcript level"/>
<keyword id="KW-1003">Cell membrane</keyword>
<keyword id="KW-0963">Cytoplasm</keyword>
<keyword id="KW-0472">Membrane</keyword>
<keyword id="KW-1185">Reference proteome</keyword>
<organism>
    <name type="scientific">Gallus gallus</name>
    <name type="common">Chicken</name>
    <dbReference type="NCBI Taxonomy" id="9031"/>
    <lineage>
        <taxon>Eukaryota</taxon>
        <taxon>Metazoa</taxon>
        <taxon>Chordata</taxon>
        <taxon>Craniata</taxon>
        <taxon>Vertebrata</taxon>
        <taxon>Euteleostomi</taxon>
        <taxon>Archelosauria</taxon>
        <taxon>Archosauria</taxon>
        <taxon>Dinosauria</taxon>
        <taxon>Saurischia</taxon>
        <taxon>Theropoda</taxon>
        <taxon>Coelurosauria</taxon>
        <taxon>Aves</taxon>
        <taxon>Neognathae</taxon>
        <taxon>Galloanserae</taxon>
        <taxon>Galliformes</taxon>
        <taxon>Phasianidae</taxon>
        <taxon>Phasianinae</taxon>
        <taxon>Gallus</taxon>
    </lineage>
</organism>
<comment type="function">
    <text evidence="1">Component of a complex required to localize phosphatidylinositol 4-kinase (PI4K) to the plasma membrane. The complex acts as a regulator of phosphatidylinositol 4-phosphate (PtdIns(4)P) synthesis.</text>
</comment>
<comment type="subunit">
    <text evidence="1">Component of a phosphatidylinositol 4-kinase (PI4K) complex.</text>
</comment>
<comment type="subcellular location">
    <subcellularLocation>
        <location evidence="1">Cytoplasm</location>
        <location evidence="1">Cytosol</location>
    </subcellularLocation>
    <subcellularLocation>
        <location evidence="1">Cell membrane</location>
    </subcellularLocation>
</comment>
<comment type="similarity">
    <text evidence="3">Belongs to the Hyccin family.</text>
</comment>
<dbReference type="EMBL" id="AJ719571">
    <property type="protein sequence ID" value="CAG31230.1"/>
    <property type="molecule type" value="mRNA"/>
</dbReference>
<dbReference type="EMBL" id="AADN03001856">
    <property type="status" value="NOT_ANNOTATED_CDS"/>
    <property type="molecule type" value="Genomic_DNA"/>
</dbReference>
<dbReference type="RefSeq" id="NP_001026154.2">
    <property type="nucleotide sequence ID" value="NM_001030983.2"/>
</dbReference>
<dbReference type="RefSeq" id="XP_015136924.1">
    <property type="nucleotide sequence ID" value="XM_015281438.1"/>
</dbReference>
<dbReference type="SMR" id="Q5ZM13"/>
<dbReference type="FunCoup" id="Q5ZM13">
    <property type="interactions" value="1788"/>
</dbReference>
<dbReference type="STRING" id="9031.ENSGALP00000058693"/>
<dbReference type="GlyGen" id="Q5ZM13">
    <property type="glycosylation" value="1 site"/>
</dbReference>
<dbReference type="PaxDb" id="9031-ENSGALP00000017753"/>
<dbReference type="Ensembl" id="ENSGALT00010004627.1">
    <property type="protein sequence ID" value="ENSGALP00010002806.1"/>
    <property type="gene ID" value="ENSGALG00010002046.1"/>
</dbReference>
<dbReference type="GeneID" id="420611"/>
<dbReference type="KEGG" id="gga:420611"/>
<dbReference type="CTD" id="420611"/>
<dbReference type="VEuPathDB" id="HostDB:geneid_420611"/>
<dbReference type="eggNOG" id="KOG4688">
    <property type="taxonomic scope" value="Eukaryota"/>
</dbReference>
<dbReference type="GeneTree" id="ENSGT00390000011295"/>
<dbReference type="InParanoid" id="Q5ZM13"/>
<dbReference type="OrthoDB" id="18937at2759"/>
<dbReference type="TreeFam" id="TF317153"/>
<dbReference type="PRO" id="PR:Q5ZM13"/>
<dbReference type="Proteomes" id="UP000000539">
    <property type="component" value="Chromosome 2"/>
</dbReference>
<dbReference type="Bgee" id="ENSGALG00000010925">
    <property type="expression patterns" value="Expressed in spermatid and 14 other cell types or tissues"/>
</dbReference>
<dbReference type="GO" id="GO:0005829">
    <property type="term" value="C:cytosol"/>
    <property type="evidence" value="ECO:0000250"/>
    <property type="project" value="UniProtKB"/>
</dbReference>
<dbReference type="GO" id="GO:0005886">
    <property type="term" value="C:plasma membrane"/>
    <property type="evidence" value="ECO:0000250"/>
    <property type="project" value="UniProtKB"/>
</dbReference>
<dbReference type="GO" id="GO:0042552">
    <property type="term" value="P:myelination"/>
    <property type="evidence" value="ECO:0000250"/>
    <property type="project" value="UniProtKB"/>
</dbReference>
<dbReference type="GO" id="GO:0046854">
    <property type="term" value="P:phosphatidylinositol phosphate biosynthetic process"/>
    <property type="evidence" value="ECO:0000250"/>
    <property type="project" value="UniProtKB"/>
</dbReference>
<dbReference type="GO" id="GO:0072659">
    <property type="term" value="P:protein localization to plasma membrane"/>
    <property type="evidence" value="ECO:0000250"/>
    <property type="project" value="UniProtKB"/>
</dbReference>
<dbReference type="InterPro" id="IPR018619">
    <property type="entry name" value="Hyccin"/>
</dbReference>
<dbReference type="PANTHER" id="PTHR31220:SF4">
    <property type="entry name" value="HYCCIN"/>
    <property type="match status" value="1"/>
</dbReference>
<dbReference type="PANTHER" id="PTHR31220">
    <property type="entry name" value="HYCCIN RELATED"/>
    <property type="match status" value="1"/>
</dbReference>
<dbReference type="Pfam" id="PF09790">
    <property type="entry name" value="Hyccin"/>
    <property type="match status" value="1"/>
</dbReference>
<accession>Q5ZM13</accession>
<accession>F1NT76</accession>
<protein>
    <recommendedName>
        <fullName>Hyccin</fullName>
    </recommendedName>
    <alternativeName>
        <fullName>Down-regulated by CTNNB1 protein A</fullName>
    </alternativeName>
</protein>